<name>SCRB1_BOVIN</name>
<organism>
    <name type="scientific">Bos taurus</name>
    <name type="common">Bovine</name>
    <dbReference type="NCBI Taxonomy" id="9913"/>
    <lineage>
        <taxon>Eukaryota</taxon>
        <taxon>Metazoa</taxon>
        <taxon>Chordata</taxon>
        <taxon>Craniata</taxon>
        <taxon>Vertebrata</taxon>
        <taxon>Euteleostomi</taxon>
        <taxon>Mammalia</taxon>
        <taxon>Eutheria</taxon>
        <taxon>Laurasiatheria</taxon>
        <taxon>Artiodactyla</taxon>
        <taxon>Ruminantia</taxon>
        <taxon>Pecora</taxon>
        <taxon>Bovidae</taxon>
        <taxon>Bovinae</taxon>
        <taxon>Bos</taxon>
    </lineage>
</organism>
<protein>
    <recommendedName>
        <fullName>Scavenger receptor class B member 1</fullName>
        <shortName>SRB1</shortName>
    </recommendedName>
    <alternativeName>
        <fullName>SR-BI</fullName>
    </alternativeName>
</protein>
<keyword id="KW-1003">Cell membrane</keyword>
<keyword id="KW-1015">Disulfide bond</keyword>
<keyword id="KW-0325">Glycoprotein</keyword>
<keyword id="KW-0472">Membrane</keyword>
<keyword id="KW-0675">Receptor</keyword>
<keyword id="KW-1185">Reference proteome</keyword>
<keyword id="KW-0812">Transmembrane</keyword>
<keyword id="KW-1133">Transmembrane helix</keyword>
<accession>O18824</accession>
<reference key="1">
    <citation type="journal article" date="1997" name="Mol. Cell. Endocrinol.">
        <title>Sequence of the bovine HDL-receptor (SR-BI) cDNA and changes in receptor mRNA expression during granulosa cell luteinization in vivo and in vitro.</title>
        <authorList>
            <person name="Rajapaksha W.R.A.K.J.S."/>
            <person name="McBride M."/>
            <person name="Robertson L."/>
            <person name="O'Shaughnessy P.J."/>
        </authorList>
    </citation>
    <scope>NUCLEOTIDE SEQUENCE [MRNA]</scope>
    <source>
        <tissue>Corpus luteum</tissue>
    </source>
</reference>
<evidence type="ECO:0000250" key="1"/>
<evidence type="ECO:0000250" key="2">
    <source>
        <dbReference type="UniProtKB" id="Q61009"/>
    </source>
</evidence>
<evidence type="ECO:0000250" key="3">
    <source>
        <dbReference type="UniProtKB" id="Q8WTV0"/>
    </source>
</evidence>
<evidence type="ECO:0000255" key="4"/>
<evidence type="ECO:0000305" key="5"/>
<comment type="function">
    <text evidence="3">Receptor for different ligands such as phospholipids, cholesterol ester, lipoproteins, phosphatidylserine and apoptotic cells. Receptor for HDL, mediating selective uptake of cholesteryl ether and HDL-dependent cholesterol efflux. Also facilitates the flux of free and esterified cholesterol between the cell surface and apoB-containing lipoproteins and modified lipoproteins, although less efficiently than HDL. May be involved in the phagocytosis of apoptotic cells, via its phosphatidylserine binding activity.</text>
</comment>
<comment type="subcellular location">
    <subcellularLocation>
        <location evidence="3">Cell membrane</location>
        <topology evidence="1">Multi-pass membrane protein</topology>
    </subcellularLocation>
    <subcellularLocation>
        <location evidence="2">Membrane</location>
        <location evidence="2">Caveola</location>
        <topology evidence="1">Multi-pass membrane protein</topology>
    </subcellularLocation>
    <text evidence="1">Predominantly localized to cholesterol and sphingomyelin-enriched domains within the plasma membrane, called caveolae.</text>
</comment>
<comment type="PTM">
    <text evidence="1">N-glycosylated.</text>
</comment>
<comment type="PTM">
    <text evidence="1">The six cysteines of the extracellular domain are all involved in intramolecular disulfide bonds.</text>
</comment>
<comment type="similarity">
    <text evidence="5">Belongs to the CD36 family.</text>
</comment>
<dbReference type="EMBL" id="AF019384">
    <property type="protein sequence ID" value="AAB70920.1"/>
    <property type="molecule type" value="mRNA"/>
</dbReference>
<dbReference type="RefSeq" id="NP_777022.1">
    <property type="nucleotide sequence ID" value="NM_174597.2"/>
</dbReference>
<dbReference type="SMR" id="O18824"/>
<dbReference type="FunCoup" id="O18824">
    <property type="interactions" value="670"/>
</dbReference>
<dbReference type="STRING" id="9913.ENSBTAP00000018959"/>
<dbReference type="GlyCosmos" id="O18824">
    <property type="glycosylation" value="9 sites, No reported glycans"/>
</dbReference>
<dbReference type="GlyGen" id="O18824">
    <property type="glycosylation" value="9 sites"/>
</dbReference>
<dbReference type="PaxDb" id="9913-ENSBTAP00000018959"/>
<dbReference type="Ensembl" id="ENSBTAT00000090636.1">
    <property type="protein sequence ID" value="ENSBTAP00000085723.1"/>
    <property type="gene ID" value="ENSBTAG00000014269.7"/>
</dbReference>
<dbReference type="GeneID" id="282346"/>
<dbReference type="KEGG" id="bta:282346"/>
<dbReference type="CTD" id="949"/>
<dbReference type="VEuPathDB" id="HostDB:ENSBTAG00000014269"/>
<dbReference type="VGNC" id="VGNC:34324">
    <property type="gene designation" value="SCARB1"/>
</dbReference>
<dbReference type="eggNOG" id="KOG3776">
    <property type="taxonomic scope" value="Eukaryota"/>
</dbReference>
<dbReference type="GeneTree" id="ENSGT00940000153372"/>
<dbReference type="HOGENOM" id="CLU_019853_4_0_1"/>
<dbReference type="InParanoid" id="O18824"/>
<dbReference type="OMA" id="DENYWIN"/>
<dbReference type="OrthoDB" id="514335at2759"/>
<dbReference type="TreeFam" id="TF317925"/>
<dbReference type="Reactome" id="R-BTA-3000471">
    <property type="pathway name" value="Scavenging by Class B Receptors"/>
</dbReference>
<dbReference type="Reactome" id="R-BTA-8964011">
    <property type="pathway name" value="HDL clearance"/>
</dbReference>
<dbReference type="Proteomes" id="UP000009136">
    <property type="component" value="Chromosome 17"/>
</dbReference>
<dbReference type="Bgee" id="ENSBTAG00000014269">
    <property type="expression patterns" value="Expressed in diaphragm and 106 other cell types or tissues"/>
</dbReference>
<dbReference type="GO" id="GO:0005901">
    <property type="term" value="C:caveola"/>
    <property type="evidence" value="ECO:0000318"/>
    <property type="project" value="GO_Central"/>
</dbReference>
<dbReference type="GO" id="GO:0009986">
    <property type="term" value="C:cell surface"/>
    <property type="evidence" value="ECO:0000318"/>
    <property type="project" value="GO_Central"/>
</dbReference>
<dbReference type="GO" id="GO:0005764">
    <property type="term" value="C:lysosome"/>
    <property type="evidence" value="ECO:0007669"/>
    <property type="project" value="Ensembl"/>
</dbReference>
<dbReference type="GO" id="GO:0001540">
    <property type="term" value="F:amyloid-beta binding"/>
    <property type="evidence" value="ECO:0007669"/>
    <property type="project" value="Ensembl"/>
</dbReference>
<dbReference type="GO" id="GO:0034186">
    <property type="term" value="F:apolipoprotein A-I binding"/>
    <property type="evidence" value="ECO:0007669"/>
    <property type="project" value="Ensembl"/>
</dbReference>
<dbReference type="GO" id="GO:0008035">
    <property type="term" value="F:high-density lipoprotein particle binding"/>
    <property type="evidence" value="ECO:0007669"/>
    <property type="project" value="Ensembl"/>
</dbReference>
<dbReference type="GO" id="GO:0070506">
    <property type="term" value="F:high-density lipoprotein particle receptor activity"/>
    <property type="evidence" value="ECO:0007669"/>
    <property type="project" value="Ensembl"/>
</dbReference>
<dbReference type="GO" id="GO:0008289">
    <property type="term" value="F:lipid binding"/>
    <property type="evidence" value="ECO:0000318"/>
    <property type="project" value="GO_Central"/>
</dbReference>
<dbReference type="GO" id="GO:0001530">
    <property type="term" value="F:lipopolysaccharide binding"/>
    <property type="evidence" value="ECO:0007669"/>
    <property type="project" value="Ensembl"/>
</dbReference>
<dbReference type="GO" id="GO:0001875">
    <property type="term" value="F:lipopolysaccharide immune receptor activity"/>
    <property type="evidence" value="ECO:0007669"/>
    <property type="project" value="Ensembl"/>
</dbReference>
<dbReference type="GO" id="GO:0030169">
    <property type="term" value="F:low-density lipoprotein particle binding"/>
    <property type="evidence" value="ECO:0000318"/>
    <property type="project" value="GO_Central"/>
</dbReference>
<dbReference type="GO" id="GO:0005044">
    <property type="term" value="F:scavenger receptor activity"/>
    <property type="evidence" value="ECO:0000318"/>
    <property type="project" value="GO_Central"/>
</dbReference>
<dbReference type="GO" id="GO:0044406">
    <property type="term" value="P:adhesion of symbiont to host"/>
    <property type="evidence" value="ECO:0007669"/>
    <property type="project" value="Ensembl"/>
</dbReference>
<dbReference type="GO" id="GO:0043534">
    <property type="term" value="P:blood vessel endothelial cell migration"/>
    <property type="evidence" value="ECO:0007669"/>
    <property type="project" value="Ensembl"/>
</dbReference>
<dbReference type="GO" id="GO:0006707">
    <property type="term" value="P:cholesterol catabolic process"/>
    <property type="evidence" value="ECO:0007669"/>
    <property type="project" value="Ensembl"/>
</dbReference>
<dbReference type="GO" id="GO:0033344">
    <property type="term" value="P:cholesterol efflux"/>
    <property type="evidence" value="ECO:0000318"/>
    <property type="project" value="GO_Central"/>
</dbReference>
<dbReference type="GO" id="GO:0042632">
    <property type="term" value="P:cholesterol homeostasis"/>
    <property type="evidence" value="ECO:0007669"/>
    <property type="project" value="Ensembl"/>
</dbReference>
<dbReference type="GO" id="GO:0070508">
    <property type="term" value="P:cholesterol import"/>
    <property type="evidence" value="ECO:0000318"/>
    <property type="project" value="GO_Central"/>
</dbReference>
<dbReference type="GO" id="GO:0032497">
    <property type="term" value="P:detection of lipopolysaccharide"/>
    <property type="evidence" value="ECO:0007669"/>
    <property type="project" value="Ensembl"/>
</dbReference>
<dbReference type="GO" id="GO:0001935">
    <property type="term" value="P:endothelial cell proliferation"/>
    <property type="evidence" value="ECO:0007669"/>
    <property type="project" value="Ensembl"/>
</dbReference>
<dbReference type="GO" id="GO:0055097">
    <property type="term" value="P:high density lipoprotein particle mediated signaling"/>
    <property type="evidence" value="ECO:0007669"/>
    <property type="project" value="Ensembl"/>
</dbReference>
<dbReference type="GO" id="GO:0034384">
    <property type="term" value="P:high-density lipoprotein particle clearance"/>
    <property type="evidence" value="ECO:0007669"/>
    <property type="project" value="Ensembl"/>
</dbReference>
<dbReference type="GO" id="GO:0034375">
    <property type="term" value="P:high-density lipoprotein particle remodeling"/>
    <property type="evidence" value="ECO:0007669"/>
    <property type="project" value="Ensembl"/>
</dbReference>
<dbReference type="GO" id="GO:0098856">
    <property type="term" value="P:intestinal lipid absorption"/>
    <property type="evidence" value="ECO:0007669"/>
    <property type="project" value="Ensembl"/>
</dbReference>
<dbReference type="GO" id="GO:0015920">
    <property type="term" value="P:lipopolysaccharide transport"/>
    <property type="evidence" value="ECO:0007669"/>
    <property type="project" value="Ensembl"/>
</dbReference>
<dbReference type="GO" id="GO:0034383">
    <property type="term" value="P:low-density lipoprotein particle clearance"/>
    <property type="evidence" value="ECO:0007669"/>
    <property type="project" value="Ensembl"/>
</dbReference>
<dbReference type="GO" id="GO:0015914">
    <property type="term" value="P:phospholipid transport"/>
    <property type="evidence" value="ECO:0007669"/>
    <property type="project" value="Ensembl"/>
</dbReference>
<dbReference type="GO" id="GO:0034381">
    <property type="term" value="P:plasma lipoprotein particle clearance"/>
    <property type="evidence" value="ECO:0000318"/>
    <property type="project" value="GO_Central"/>
</dbReference>
<dbReference type="GO" id="GO:0010886">
    <property type="term" value="P:positive regulation of cholesterol storage"/>
    <property type="evidence" value="ECO:0007669"/>
    <property type="project" value="Ensembl"/>
</dbReference>
<dbReference type="GO" id="GO:0010750">
    <property type="term" value="P:positive regulation of nitric oxide mediated signal transduction"/>
    <property type="evidence" value="ECO:0007669"/>
    <property type="project" value="Ensembl"/>
</dbReference>
<dbReference type="GO" id="GO:1902070">
    <property type="term" value="P:positive regulation of sphingolipid mediated signaling pathway"/>
    <property type="evidence" value="ECO:0007669"/>
    <property type="project" value="Ensembl"/>
</dbReference>
<dbReference type="GO" id="GO:0010867">
    <property type="term" value="P:positive regulation of triglyceride biosynthetic process"/>
    <property type="evidence" value="ECO:0007669"/>
    <property type="project" value="Ensembl"/>
</dbReference>
<dbReference type="GO" id="GO:0043654">
    <property type="term" value="P:recognition of apoptotic cell"/>
    <property type="evidence" value="ECO:0000318"/>
    <property type="project" value="GO_Central"/>
</dbReference>
<dbReference type="GO" id="GO:0010899">
    <property type="term" value="P:regulation of phosphatidylcholine catabolic process"/>
    <property type="evidence" value="ECO:0007669"/>
    <property type="project" value="Ensembl"/>
</dbReference>
<dbReference type="GO" id="GO:0043691">
    <property type="term" value="P:reverse cholesterol transport"/>
    <property type="evidence" value="ECO:0007669"/>
    <property type="project" value="Ensembl"/>
</dbReference>
<dbReference type="GO" id="GO:0070328">
    <property type="term" value="P:triglyceride homeostasis"/>
    <property type="evidence" value="ECO:0007669"/>
    <property type="project" value="Ensembl"/>
</dbReference>
<dbReference type="GO" id="GO:0042311">
    <property type="term" value="P:vasodilation"/>
    <property type="evidence" value="ECO:0007669"/>
    <property type="project" value="Ensembl"/>
</dbReference>
<dbReference type="GO" id="GO:0035461">
    <property type="term" value="P:vitamin transmembrane transport"/>
    <property type="evidence" value="ECO:0007669"/>
    <property type="project" value="Ensembl"/>
</dbReference>
<dbReference type="InterPro" id="IPR002159">
    <property type="entry name" value="CD36_fam"/>
</dbReference>
<dbReference type="PANTHER" id="PTHR11923:SF110">
    <property type="entry name" value="SCAVENGER RECEPTOR CLASS B MEMBER 1"/>
    <property type="match status" value="1"/>
</dbReference>
<dbReference type="PANTHER" id="PTHR11923">
    <property type="entry name" value="SCAVENGER RECEPTOR CLASS B TYPE-1 SR-B1"/>
    <property type="match status" value="1"/>
</dbReference>
<dbReference type="Pfam" id="PF01130">
    <property type="entry name" value="CD36"/>
    <property type="match status" value="1"/>
</dbReference>
<dbReference type="PRINTS" id="PR01609">
    <property type="entry name" value="CD36FAMILY"/>
</dbReference>
<proteinExistence type="evidence at transcript level"/>
<gene>
    <name type="primary">SCARB1</name>
</gene>
<feature type="chain" id="PRO_0000144158" description="Scavenger receptor class B member 1">
    <location>
        <begin position="1"/>
        <end position="509"/>
    </location>
</feature>
<feature type="topological domain" description="Cytoplasmic" evidence="4">
    <location>
        <begin position="1"/>
        <end position="11"/>
    </location>
</feature>
<feature type="transmembrane region" description="Helical" evidence="4">
    <location>
        <begin position="12"/>
        <end position="32"/>
    </location>
</feature>
<feature type="topological domain" description="Extracellular" evidence="4">
    <location>
        <begin position="33"/>
        <end position="440"/>
    </location>
</feature>
<feature type="transmembrane region" description="Helical" evidence="4">
    <location>
        <begin position="441"/>
        <end position="461"/>
    </location>
</feature>
<feature type="topological domain" description="Cytoplasmic" evidence="4">
    <location>
        <begin position="462"/>
        <end position="509"/>
    </location>
</feature>
<feature type="glycosylation site" description="N-linked (GlcNAc...) asparagine" evidence="4">
    <location>
        <position position="102"/>
    </location>
</feature>
<feature type="glycosylation site" description="N-linked (GlcNAc...) asparagine" evidence="4">
    <location>
        <position position="108"/>
    </location>
</feature>
<feature type="glycosylation site" description="N-linked (GlcNAc...) asparagine" evidence="4">
    <location>
        <position position="173"/>
    </location>
</feature>
<feature type="glycosylation site" description="N-linked (GlcNAc...) asparagine" evidence="4">
    <location>
        <position position="212"/>
    </location>
</feature>
<feature type="glycosylation site" description="N-linked (GlcNAc...) asparagine" evidence="4">
    <location>
        <position position="227"/>
    </location>
</feature>
<feature type="glycosylation site" description="N-linked (GlcNAc...) asparagine" evidence="4">
    <location>
        <position position="255"/>
    </location>
</feature>
<feature type="glycosylation site" description="N-linked (GlcNAc...) asparagine" evidence="4">
    <location>
        <position position="310"/>
    </location>
</feature>
<feature type="glycosylation site" description="N-linked (GlcNAc...) asparagine" evidence="4">
    <location>
        <position position="330"/>
    </location>
</feature>
<feature type="glycosylation site" description="N-linked (GlcNAc...) asparagine" evidence="4">
    <location>
        <position position="383"/>
    </location>
</feature>
<feature type="disulfide bond" evidence="1">
    <location>
        <begin position="251"/>
        <end position="384"/>
    </location>
</feature>
<sequence>MGNLSRARRVTAALGFIGLLFAVLGIIMIVMVPSIIKQQVLKNVRIDPNSLSFNMWKEIPVPFYLSVYFFNIVNPEGIIQGQKPQVQEHGPYVYREFRHKSNITFNNNDTVSFLEYRSYQFQPDKSRGQESDYIVMPNILVLSASMMMENRPGLLKLMMTLAFSTLGQRAFMNRTVGEIMWGYDDPLIHLINQYFPNSLPFKGKFGLFAELNNSDSGLFTVFTGVKNFSRIHLVDKWNGVSKVNYWHSDQCNMINGTSGQMWAPFMTPESSLEFYSPEACRSMKLVYKEQGVFGGIPTFRFVAPSTLFANGSVYPPNEGFCPCRESGIQNVSTCRFNAPLFLSHPHFYNADPVLAEAVSGLHPNPKEHSLFLDIHPVTGIPMNCSVKLQLSLFVKSVKGIGQTGNIQPVVLPLMWFEESGAMEGETLETFYIQLVLMPKVLHYAQYVLLALGCVLLLIPIIYQIRSQEKCYLFWISFKKGSKDKEAVQAYSEFLMTSAPKGTVLQEARL</sequence>